<proteinExistence type="inferred from homology"/>
<gene>
    <name evidence="1" type="primary">nfo</name>
    <name type="ordered locus">VV0654</name>
</gene>
<keyword id="KW-0227">DNA damage</keyword>
<keyword id="KW-0234">DNA repair</keyword>
<keyword id="KW-0255">Endonuclease</keyword>
<keyword id="KW-0378">Hydrolase</keyword>
<keyword id="KW-0479">Metal-binding</keyword>
<keyword id="KW-0540">Nuclease</keyword>
<keyword id="KW-0862">Zinc</keyword>
<protein>
    <recommendedName>
        <fullName evidence="1">Probable endonuclease 4</fullName>
        <ecNumber evidence="1">3.1.21.2</ecNumber>
    </recommendedName>
    <alternativeName>
        <fullName evidence="1">Endodeoxyribonuclease IV</fullName>
    </alternativeName>
    <alternativeName>
        <fullName evidence="1">Endonuclease IV</fullName>
    </alternativeName>
</protein>
<reference key="1">
    <citation type="journal article" date="2003" name="Genome Res.">
        <title>Comparative genome analysis of Vibrio vulnificus, a marine pathogen.</title>
        <authorList>
            <person name="Chen C.-Y."/>
            <person name="Wu K.-M."/>
            <person name="Chang Y.-C."/>
            <person name="Chang C.-H."/>
            <person name="Tsai H.-C."/>
            <person name="Liao T.-L."/>
            <person name="Liu Y.-M."/>
            <person name="Chen H.-J."/>
            <person name="Shen A.B.-T."/>
            <person name="Li J.-C."/>
            <person name="Su T.-L."/>
            <person name="Shao C.-P."/>
            <person name="Lee C.-T."/>
            <person name="Hor L.-I."/>
            <person name="Tsai S.-F."/>
        </authorList>
    </citation>
    <scope>NUCLEOTIDE SEQUENCE [LARGE SCALE GENOMIC DNA]</scope>
    <source>
        <strain>YJ016</strain>
    </source>
</reference>
<name>END4_VIBVY</name>
<organism>
    <name type="scientific">Vibrio vulnificus (strain YJ016)</name>
    <dbReference type="NCBI Taxonomy" id="196600"/>
    <lineage>
        <taxon>Bacteria</taxon>
        <taxon>Pseudomonadati</taxon>
        <taxon>Pseudomonadota</taxon>
        <taxon>Gammaproteobacteria</taxon>
        <taxon>Vibrionales</taxon>
        <taxon>Vibrionaceae</taxon>
        <taxon>Vibrio</taxon>
    </lineage>
</organism>
<accession>Q7MNR1</accession>
<feature type="chain" id="PRO_0000190887" description="Probable endonuclease 4">
    <location>
        <begin position="1"/>
        <end position="293"/>
    </location>
</feature>
<feature type="binding site" evidence="1">
    <location>
        <position position="78"/>
    </location>
    <ligand>
        <name>Zn(2+)</name>
        <dbReference type="ChEBI" id="CHEBI:29105"/>
        <label>1</label>
    </ligand>
</feature>
<feature type="binding site" evidence="1">
    <location>
        <position position="118"/>
    </location>
    <ligand>
        <name>Zn(2+)</name>
        <dbReference type="ChEBI" id="CHEBI:29105"/>
        <label>1</label>
    </ligand>
</feature>
<feature type="binding site" evidence="1">
    <location>
        <position position="154"/>
    </location>
    <ligand>
        <name>Zn(2+)</name>
        <dbReference type="ChEBI" id="CHEBI:29105"/>
        <label>1</label>
    </ligand>
</feature>
<feature type="binding site" evidence="1">
    <location>
        <position position="154"/>
    </location>
    <ligand>
        <name>Zn(2+)</name>
        <dbReference type="ChEBI" id="CHEBI:29105"/>
        <label>2</label>
    </ligand>
</feature>
<feature type="binding site" evidence="1">
    <location>
        <position position="188"/>
    </location>
    <ligand>
        <name>Zn(2+)</name>
        <dbReference type="ChEBI" id="CHEBI:29105"/>
        <label>2</label>
    </ligand>
</feature>
<feature type="binding site" evidence="1">
    <location>
        <position position="191"/>
    </location>
    <ligand>
        <name>Zn(2+)</name>
        <dbReference type="ChEBI" id="CHEBI:29105"/>
        <label>3</label>
    </ligand>
</feature>
<feature type="binding site" evidence="1">
    <location>
        <position position="225"/>
    </location>
    <ligand>
        <name>Zn(2+)</name>
        <dbReference type="ChEBI" id="CHEBI:29105"/>
        <label>2</label>
    </ligand>
</feature>
<feature type="binding site" evidence="1">
    <location>
        <position position="238"/>
    </location>
    <ligand>
        <name>Zn(2+)</name>
        <dbReference type="ChEBI" id="CHEBI:29105"/>
        <label>3</label>
    </ligand>
</feature>
<feature type="binding site" evidence="1">
    <location>
        <position position="240"/>
    </location>
    <ligand>
        <name>Zn(2+)</name>
        <dbReference type="ChEBI" id="CHEBI:29105"/>
        <label>3</label>
    </ligand>
</feature>
<feature type="binding site" evidence="1">
    <location>
        <position position="270"/>
    </location>
    <ligand>
        <name>Zn(2+)</name>
        <dbReference type="ChEBI" id="CHEBI:29105"/>
        <label>2</label>
    </ligand>
</feature>
<dbReference type="EC" id="3.1.21.2" evidence="1"/>
<dbReference type="EMBL" id="BA000037">
    <property type="protein sequence ID" value="BAC93418.1"/>
    <property type="molecule type" value="Genomic_DNA"/>
</dbReference>
<dbReference type="RefSeq" id="WP_011149530.1">
    <property type="nucleotide sequence ID" value="NC_005139.1"/>
</dbReference>
<dbReference type="SMR" id="Q7MNR1"/>
<dbReference type="STRING" id="672.VV93_v1c05930"/>
<dbReference type="KEGG" id="vvy:VV0654"/>
<dbReference type="PATRIC" id="fig|196600.6.peg.673"/>
<dbReference type="eggNOG" id="COG0648">
    <property type="taxonomic scope" value="Bacteria"/>
</dbReference>
<dbReference type="HOGENOM" id="CLU_025885_0_4_6"/>
<dbReference type="Proteomes" id="UP000002675">
    <property type="component" value="Chromosome I"/>
</dbReference>
<dbReference type="GO" id="GO:0008833">
    <property type="term" value="F:deoxyribonuclease IV (phage-T4-induced) activity"/>
    <property type="evidence" value="ECO:0007669"/>
    <property type="project" value="UniProtKB-UniRule"/>
</dbReference>
<dbReference type="GO" id="GO:0003677">
    <property type="term" value="F:DNA binding"/>
    <property type="evidence" value="ECO:0007669"/>
    <property type="project" value="InterPro"/>
</dbReference>
<dbReference type="GO" id="GO:0003906">
    <property type="term" value="F:DNA-(apurinic or apyrimidinic site) endonuclease activity"/>
    <property type="evidence" value="ECO:0007669"/>
    <property type="project" value="TreeGrafter"/>
</dbReference>
<dbReference type="GO" id="GO:0008081">
    <property type="term" value="F:phosphoric diester hydrolase activity"/>
    <property type="evidence" value="ECO:0007669"/>
    <property type="project" value="TreeGrafter"/>
</dbReference>
<dbReference type="GO" id="GO:0008270">
    <property type="term" value="F:zinc ion binding"/>
    <property type="evidence" value="ECO:0007669"/>
    <property type="project" value="UniProtKB-UniRule"/>
</dbReference>
<dbReference type="GO" id="GO:0006284">
    <property type="term" value="P:base-excision repair"/>
    <property type="evidence" value="ECO:0007669"/>
    <property type="project" value="TreeGrafter"/>
</dbReference>
<dbReference type="CDD" id="cd00019">
    <property type="entry name" value="AP2Ec"/>
    <property type="match status" value="1"/>
</dbReference>
<dbReference type="FunFam" id="3.20.20.150:FF:000001">
    <property type="entry name" value="Probable endonuclease 4"/>
    <property type="match status" value="1"/>
</dbReference>
<dbReference type="Gene3D" id="3.20.20.150">
    <property type="entry name" value="Divalent-metal-dependent TIM barrel enzymes"/>
    <property type="match status" value="1"/>
</dbReference>
<dbReference type="HAMAP" id="MF_00152">
    <property type="entry name" value="Nfo"/>
    <property type="match status" value="1"/>
</dbReference>
<dbReference type="InterPro" id="IPR001719">
    <property type="entry name" value="AP_endonuc_2"/>
</dbReference>
<dbReference type="InterPro" id="IPR018246">
    <property type="entry name" value="AP_endonuc_F2_Zn_BS"/>
</dbReference>
<dbReference type="InterPro" id="IPR036237">
    <property type="entry name" value="Xyl_isomerase-like_sf"/>
</dbReference>
<dbReference type="InterPro" id="IPR013022">
    <property type="entry name" value="Xyl_isomerase-like_TIM-brl"/>
</dbReference>
<dbReference type="NCBIfam" id="TIGR00587">
    <property type="entry name" value="nfo"/>
    <property type="match status" value="1"/>
</dbReference>
<dbReference type="NCBIfam" id="NF002199">
    <property type="entry name" value="PRK01060.1-4"/>
    <property type="match status" value="1"/>
</dbReference>
<dbReference type="PANTHER" id="PTHR21445:SF0">
    <property type="entry name" value="APURINIC-APYRIMIDINIC ENDONUCLEASE"/>
    <property type="match status" value="1"/>
</dbReference>
<dbReference type="PANTHER" id="PTHR21445">
    <property type="entry name" value="ENDONUCLEASE IV ENDODEOXYRIBONUCLEASE IV"/>
    <property type="match status" value="1"/>
</dbReference>
<dbReference type="Pfam" id="PF01261">
    <property type="entry name" value="AP_endonuc_2"/>
    <property type="match status" value="1"/>
</dbReference>
<dbReference type="SMART" id="SM00518">
    <property type="entry name" value="AP2Ec"/>
    <property type="match status" value="1"/>
</dbReference>
<dbReference type="SUPFAM" id="SSF51658">
    <property type="entry name" value="Xylose isomerase-like"/>
    <property type="match status" value="1"/>
</dbReference>
<dbReference type="PROSITE" id="PS00729">
    <property type="entry name" value="AP_NUCLEASE_F2_1"/>
    <property type="match status" value="1"/>
</dbReference>
<dbReference type="PROSITE" id="PS00730">
    <property type="entry name" value="AP_NUCLEASE_F2_2"/>
    <property type="match status" value="1"/>
</dbReference>
<dbReference type="PROSITE" id="PS00731">
    <property type="entry name" value="AP_NUCLEASE_F2_3"/>
    <property type="match status" value="1"/>
</dbReference>
<dbReference type="PROSITE" id="PS51432">
    <property type="entry name" value="AP_NUCLEASE_F2_4"/>
    <property type="match status" value="1"/>
</dbReference>
<sequence>MTNSKNRFGNKFIGAHVSAAGGVDNAPLRAREIGANAFALFTKNQRQWVAKPLEEKTISAFKANCALLGFSPQQILPHDSYLINLGAPEAEKLEKSRLAFIDEMERCQLLGLNLLNFHPGSHLEKISEKACLYLIAESINLAHQAVPDVVAVIENTAGQGSNLGWRFEHLAEIIEQVEDKSRVGVCLDTCHTFAAGYDLRTPEACEATFAEFERVVGMHYLRAMHINDSKVKLASKVDRHHALGKGEIGWDCFEYIAKDSRFDSIPLILETIEPELWPQEIEQLRKYHLSSIA</sequence>
<comment type="function">
    <text evidence="1">Endonuclease IV plays a role in DNA repair. It cleaves phosphodiester bonds at apurinic or apyrimidinic (AP) sites, generating a 3'-hydroxyl group and a 5'-terminal sugar phosphate.</text>
</comment>
<comment type="catalytic activity">
    <reaction evidence="1">
        <text>Endonucleolytic cleavage to 5'-phosphooligonucleotide end-products.</text>
        <dbReference type="EC" id="3.1.21.2"/>
    </reaction>
</comment>
<comment type="cofactor">
    <cofactor evidence="1">
        <name>Zn(2+)</name>
        <dbReference type="ChEBI" id="CHEBI:29105"/>
    </cofactor>
    <text evidence="1">Binds 3 Zn(2+) ions.</text>
</comment>
<comment type="similarity">
    <text evidence="1">Belongs to the AP endonuclease 2 family.</text>
</comment>
<evidence type="ECO:0000255" key="1">
    <source>
        <dbReference type="HAMAP-Rule" id="MF_00152"/>
    </source>
</evidence>